<name>ASSY_STAAW</name>
<protein>
    <recommendedName>
        <fullName evidence="1">Argininosuccinate synthase</fullName>
        <ecNumber evidence="1">6.3.4.5</ecNumber>
    </recommendedName>
    <alternativeName>
        <fullName evidence="1">Citrulline--aspartate ligase</fullName>
    </alternativeName>
</protein>
<keyword id="KW-0028">Amino-acid biosynthesis</keyword>
<keyword id="KW-0055">Arginine biosynthesis</keyword>
<keyword id="KW-0067">ATP-binding</keyword>
<keyword id="KW-0963">Cytoplasm</keyword>
<keyword id="KW-0436">Ligase</keyword>
<keyword id="KW-0547">Nucleotide-binding</keyword>
<gene>
    <name evidence="1" type="primary">argG</name>
    <name type="ordered locus">MW0843</name>
</gene>
<reference key="1">
    <citation type="journal article" date="2002" name="Lancet">
        <title>Genome and virulence determinants of high virulence community-acquired MRSA.</title>
        <authorList>
            <person name="Baba T."/>
            <person name="Takeuchi F."/>
            <person name="Kuroda M."/>
            <person name="Yuzawa H."/>
            <person name="Aoki K."/>
            <person name="Oguchi A."/>
            <person name="Nagai Y."/>
            <person name="Iwama N."/>
            <person name="Asano K."/>
            <person name="Naimi T."/>
            <person name="Kuroda H."/>
            <person name="Cui L."/>
            <person name="Yamamoto K."/>
            <person name="Hiramatsu K."/>
        </authorList>
    </citation>
    <scope>NUCLEOTIDE SEQUENCE [LARGE SCALE GENOMIC DNA]</scope>
    <source>
        <strain>MW2</strain>
    </source>
</reference>
<organism>
    <name type="scientific">Staphylococcus aureus (strain MW2)</name>
    <dbReference type="NCBI Taxonomy" id="196620"/>
    <lineage>
        <taxon>Bacteria</taxon>
        <taxon>Bacillati</taxon>
        <taxon>Bacillota</taxon>
        <taxon>Bacilli</taxon>
        <taxon>Bacillales</taxon>
        <taxon>Staphylococcaceae</taxon>
        <taxon>Staphylococcus</taxon>
    </lineage>
</organism>
<proteinExistence type="inferred from homology"/>
<sequence>MKEKIVLAYSGGLDTSVAVQWLIDKGYDVVACCLDVGEGKDLDIVYKKALDMGAVECHIIDATKEFSDEYVSYAIKGNLMYENAYPLVSALSRPLIAKKLVEIAEKTNSVGIAHGCTGKGNDQVRFEVAIKALNPSLKAFAPVREWAWSREEEIDYAIKHNIPVSINHDSPYSIDQNLWGRANECGILEDPYAAPPEDAFDLTNALEETPDAADEIILTFDKGIPVQIDGKTYELDDLILTLNALAGKHGIGRIDHVENRLVGIKSREIYEAPAAEVILKAHKALETITLTKDVAHFKPIIEKQFAEQLYNGLWFSPLTDSLKLFIDSTQQYVSGDVRIKLFKGNAIVNGRKSPYTLYDEKLATYTKEDAFNQDAAVGFIDIYGLPTQVNSMLHGGYSNEQ</sequence>
<comment type="catalytic activity">
    <reaction evidence="1">
        <text>L-citrulline + L-aspartate + ATP = 2-(N(omega)-L-arginino)succinate + AMP + diphosphate + H(+)</text>
        <dbReference type="Rhea" id="RHEA:10932"/>
        <dbReference type="ChEBI" id="CHEBI:15378"/>
        <dbReference type="ChEBI" id="CHEBI:29991"/>
        <dbReference type="ChEBI" id="CHEBI:30616"/>
        <dbReference type="ChEBI" id="CHEBI:33019"/>
        <dbReference type="ChEBI" id="CHEBI:57472"/>
        <dbReference type="ChEBI" id="CHEBI:57743"/>
        <dbReference type="ChEBI" id="CHEBI:456215"/>
        <dbReference type="EC" id="6.3.4.5"/>
    </reaction>
</comment>
<comment type="pathway">
    <text evidence="1">Amino-acid biosynthesis; L-arginine biosynthesis; L-arginine from L-ornithine and carbamoyl phosphate: step 2/3.</text>
</comment>
<comment type="subunit">
    <text evidence="1">Homotetramer.</text>
</comment>
<comment type="subcellular location">
    <subcellularLocation>
        <location evidence="1">Cytoplasm</location>
    </subcellularLocation>
</comment>
<comment type="similarity">
    <text evidence="1">Belongs to the argininosuccinate synthase family. Type 1 subfamily.</text>
</comment>
<feature type="chain" id="PRO_0000148640" description="Argininosuccinate synthase">
    <location>
        <begin position="1"/>
        <end position="401"/>
    </location>
</feature>
<feature type="binding site" evidence="1">
    <location>
        <begin position="8"/>
        <end position="16"/>
    </location>
    <ligand>
        <name>ATP</name>
        <dbReference type="ChEBI" id="CHEBI:30616"/>
    </ligand>
</feature>
<feature type="binding site" evidence="1">
    <location>
        <position position="85"/>
    </location>
    <ligand>
        <name>L-citrulline</name>
        <dbReference type="ChEBI" id="CHEBI:57743"/>
    </ligand>
</feature>
<feature type="binding site" evidence="1">
    <location>
        <position position="115"/>
    </location>
    <ligand>
        <name>ATP</name>
        <dbReference type="ChEBI" id="CHEBI:30616"/>
    </ligand>
</feature>
<feature type="binding site" evidence="1">
    <location>
        <position position="117"/>
    </location>
    <ligand>
        <name>L-aspartate</name>
        <dbReference type="ChEBI" id="CHEBI:29991"/>
    </ligand>
</feature>
<feature type="binding site" evidence="1">
    <location>
        <position position="121"/>
    </location>
    <ligand>
        <name>L-aspartate</name>
        <dbReference type="ChEBI" id="CHEBI:29991"/>
    </ligand>
</feature>
<feature type="binding site" evidence="1">
    <location>
        <position position="121"/>
    </location>
    <ligand>
        <name>L-citrulline</name>
        <dbReference type="ChEBI" id="CHEBI:57743"/>
    </ligand>
</feature>
<feature type="binding site" evidence="1">
    <location>
        <position position="122"/>
    </location>
    <ligand>
        <name>L-aspartate</name>
        <dbReference type="ChEBI" id="CHEBI:29991"/>
    </ligand>
</feature>
<feature type="binding site" evidence="1">
    <location>
        <position position="125"/>
    </location>
    <ligand>
        <name>L-citrulline</name>
        <dbReference type="ChEBI" id="CHEBI:57743"/>
    </ligand>
</feature>
<feature type="binding site" evidence="1">
    <location>
        <position position="173"/>
    </location>
    <ligand>
        <name>L-citrulline</name>
        <dbReference type="ChEBI" id="CHEBI:57743"/>
    </ligand>
</feature>
<feature type="binding site" evidence="1">
    <location>
        <position position="258"/>
    </location>
    <ligand>
        <name>L-citrulline</name>
        <dbReference type="ChEBI" id="CHEBI:57743"/>
    </ligand>
</feature>
<feature type="binding site" evidence="1">
    <location>
        <position position="270"/>
    </location>
    <ligand>
        <name>L-citrulline</name>
        <dbReference type="ChEBI" id="CHEBI:57743"/>
    </ligand>
</feature>
<dbReference type="EC" id="6.3.4.5" evidence="1"/>
<dbReference type="EMBL" id="BA000033">
    <property type="protein sequence ID" value="BAB94708.1"/>
    <property type="molecule type" value="Genomic_DNA"/>
</dbReference>
<dbReference type="RefSeq" id="WP_000660041.1">
    <property type="nucleotide sequence ID" value="NC_003923.1"/>
</dbReference>
<dbReference type="SMR" id="Q8NXF2"/>
<dbReference type="KEGG" id="sam:MW0843"/>
<dbReference type="HOGENOM" id="CLU_032784_4_2_9"/>
<dbReference type="UniPathway" id="UPA00068">
    <property type="reaction ID" value="UER00113"/>
</dbReference>
<dbReference type="GO" id="GO:0005737">
    <property type="term" value="C:cytoplasm"/>
    <property type="evidence" value="ECO:0007669"/>
    <property type="project" value="UniProtKB-SubCell"/>
</dbReference>
<dbReference type="GO" id="GO:0004055">
    <property type="term" value="F:argininosuccinate synthase activity"/>
    <property type="evidence" value="ECO:0007669"/>
    <property type="project" value="UniProtKB-UniRule"/>
</dbReference>
<dbReference type="GO" id="GO:0005524">
    <property type="term" value="F:ATP binding"/>
    <property type="evidence" value="ECO:0007669"/>
    <property type="project" value="UniProtKB-UniRule"/>
</dbReference>
<dbReference type="GO" id="GO:0000053">
    <property type="term" value="P:argininosuccinate metabolic process"/>
    <property type="evidence" value="ECO:0007669"/>
    <property type="project" value="TreeGrafter"/>
</dbReference>
<dbReference type="GO" id="GO:0006526">
    <property type="term" value="P:L-arginine biosynthetic process"/>
    <property type="evidence" value="ECO:0007669"/>
    <property type="project" value="UniProtKB-UniRule"/>
</dbReference>
<dbReference type="GO" id="GO:0000050">
    <property type="term" value="P:urea cycle"/>
    <property type="evidence" value="ECO:0007669"/>
    <property type="project" value="TreeGrafter"/>
</dbReference>
<dbReference type="CDD" id="cd01999">
    <property type="entry name" value="ASS"/>
    <property type="match status" value="1"/>
</dbReference>
<dbReference type="FunFam" id="1.20.5.470:FF:000002">
    <property type="entry name" value="Argininosuccinate synthase"/>
    <property type="match status" value="1"/>
</dbReference>
<dbReference type="FunFam" id="3.40.50.620:FF:000038">
    <property type="entry name" value="Argininosuccinate synthase"/>
    <property type="match status" value="1"/>
</dbReference>
<dbReference type="FunFam" id="3.90.1260.10:FF:000007">
    <property type="entry name" value="Argininosuccinate synthase"/>
    <property type="match status" value="1"/>
</dbReference>
<dbReference type="Gene3D" id="3.90.1260.10">
    <property type="entry name" value="Argininosuccinate synthetase, chain A, domain 2"/>
    <property type="match status" value="1"/>
</dbReference>
<dbReference type="Gene3D" id="3.40.50.620">
    <property type="entry name" value="HUPs"/>
    <property type="match status" value="1"/>
</dbReference>
<dbReference type="Gene3D" id="1.20.5.470">
    <property type="entry name" value="Single helix bin"/>
    <property type="match status" value="1"/>
</dbReference>
<dbReference type="HAMAP" id="MF_00005">
    <property type="entry name" value="Arg_succ_synth_type1"/>
    <property type="match status" value="1"/>
</dbReference>
<dbReference type="InterPro" id="IPR048268">
    <property type="entry name" value="Arginosuc_syn_C"/>
</dbReference>
<dbReference type="InterPro" id="IPR048267">
    <property type="entry name" value="Arginosuc_syn_N"/>
</dbReference>
<dbReference type="InterPro" id="IPR001518">
    <property type="entry name" value="Arginosuc_synth"/>
</dbReference>
<dbReference type="InterPro" id="IPR018223">
    <property type="entry name" value="Arginosuc_synth_CS"/>
</dbReference>
<dbReference type="InterPro" id="IPR023434">
    <property type="entry name" value="Arginosuc_synth_type_1_subfam"/>
</dbReference>
<dbReference type="InterPro" id="IPR024074">
    <property type="entry name" value="AS_cat/multimer_dom_body"/>
</dbReference>
<dbReference type="InterPro" id="IPR014729">
    <property type="entry name" value="Rossmann-like_a/b/a_fold"/>
</dbReference>
<dbReference type="NCBIfam" id="TIGR00032">
    <property type="entry name" value="argG"/>
    <property type="match status" value="1"/>
</dbReference>
<dbReference type="NCBIfam" id="NF001770">
    <property type="entry name" value="PRK00509.1"/>
    <property type="match status" value="1"/>
</dbReference>
<dbReference type="PANTHER" id="PTHR11587">
    <property type="entry name" value="ARGININOSUCCINATE SYNTHASE"/>
    <property type="match status" value="1"/>
</dbReference>
<dbReference type="PANTHER" id="PTHR11587:SF2">
    <property type="entry name" value="ARGININOSUCCINATE SYNTHASE"/>
    <property type="match status" value="1"/>
</dbReference>
<dbReference type="Pfam" id="PF20979">
    <property type="entry name" value="Arginosuc_syn_C"/>
    <property type="match status" value="1"/>
</dbReference>
<dbReference type="Pfam" id="PF00764">
    <property type="entry name" value="Arginosuc_synth"/>
    <property type="match status" value="1"/>
</dbReference>
<dbReference type="SUPFAM" id="SSF52402">
    <property type="entry name" value="Adenine nucleotide alpha hydrolases-like"/>
    <property type="match status" value="1"/>
</dbReference>
<dbReference type="SUPFAM" id="SSF69864">
    <property type="entry name" value="Argininosuccinate synthetase, C-terminal domain"/>
    <property type="match status" value="1"/>
</dbReference>
<dbReference type="PROSITE" id="PS00564">
    <property type="entry name" value="ARGININOSUCCIN_SYN_1"/>
    <property type="match status" value="1"/>
</dbReference>
<dbReference type="PROSITE" id="PS00565">
    <property type="entry name" value="ARGININOSUCCIN_SYN_2"/>
    <property type="match status" value="1"/>
</dbReference>
<accession>Q8NXF2</accession>
<evidence type="ECO:0000255" key="1">
    <source>
        <dbReference type="HAMAP-Rule" id="MF_00005"/>
    </source>
</evidence>